<name>RIMM_NOVAD</name>
<organism>
    <name type="scientific">Novosphingobium aromaticivorans (strain ATCC 700278 / DSM 12444 / CCUG 56034 / CIP 105152 / NBRC 16084 / F199)</name>
    <dbReference type="NCBI Taxonomy" id="279238"/>
    <lineage>
        <taxon>Bacteria</taxon>
        <taxon>Pseudomonadati</taxon>
        <taxon>Pseudomonadota</taxon>
        <taxon>Alphaproteobacteria</taxon>
        <taxon>Sphingomonadales</taxon>
        <taxon>Sphingomonadaceae</taxon>
        <taxon>Novosphingobium</taxon>
    </lineage>
</organism>
<gene>
    <name evidence="1" type="primary">rimM</name>
    <name type="ordered locus">Saro_1406</name>
</gene>
<protein>
    <recommendedName>
        <fullName evidence="1">Ribosome maturation factor RimM</fullName>
    </recommendedName>
</protein>
<evidence type="ECO:0000255" key="1">
    <source>
        <dbReference type="HAMAP-Rule" id="MF_00014"/>
    </source>
</evidence>
<keyword id="KW-0143">Chaperone</keyword>
<keyword id="KW-0963">Cytoplasm</keyword>
<keyword id="KW-1185">Reference proteome</keyword>
<keyword id="KW-0690">Ribosome biogenesis</keyword>
<keyword id="KW-0698">rRNA processing</keyword>
<dbReference type="EMBL" id="CP000248">
    <property type="protein sequence ID" value="ABD25850.1"/>
    <property type="molecule type" value="Genomic_DNA"/>
</dbReference>
<dbReference type="RefSeq" id="WP_011445064.1">
    <property type="nucleotide sequence ID" value="NC_007794.1"/>
</dbReference>
<dbReference type="SMR" id="Q2G8H3"/>
<dbReference type="STRING" id="279238.Saro_1406"/>
<dbReference type="KEGG" id="nar:Saro_1406"/>
<dbReference type="eggNOG" id="COG0806">
    <property type="taxonomic scope" value="Bacteria"/>
</dbReference>
<dbReference type="HOGENOM" id="CLU_077636_0_1_5"/>
<dbReference type="Proteomes" id="UP000009134">
    <property type="component" value="Chromosome"/>
</dbReference>
<dbReference type="GO" id="GO:0005737">
    <property type="term" value="C:cytoplasm"/>
    <property type="evidence" value="ECO:0007669"/>
    <property type="project" value="UniProtKB-SubCell"/>
</dbReference>
<dbReference type="GO" id="GO:0005840">
    <property type="term" value="C:ribosome"/>
    <property type="evidence" value="ECO:0007669"/>
    <property type="project" value="InterPro"/>
</dbReference>
<dbReference type="GO" id="GO:0043022">
    <property type="term" value="F:ribosome binding"/>
    <property type="evidence" value="ECO:0007669"/>
    <property type="project" value="InterPro"/>
</dbReference>
<dbReference type="GO" id="GO:0042274">
    <property type="term" value="P:ribosomal small subunit biogenesis"/>
    <property type="evidence" value="ECO:0007669"/>
    <property type="project" value="UniProtKB-UniRule"/>
</dbReference>
<dbReference type="GO" id="GO:0006364">
    <property type="term" value="P:rRNA processing"/>
    <property type="evidence" value="ECO:0007669"/>
    <property type="project" value="UniProtKB-UniRule"/>
</dbReference>
<dbReference type="Gene3D" id="2.30.30.240">
    <property type="entry name" value="PRC-barrel domain"/>
    <property type="match status" value="1"/>
</dbReference>
<dbReference type="Gene3D" id="2.40.30.60">
    <property type="entry name" value="RimM"/>
    <property type="match status" value="1"/>
</dbReference>
<dbReference type="HAMAP" id="MF_00014">
    <property type="entry name" value="Ribosome_mat_RimM"/>
    <property type="match status" value="1"/>
</dbReference>
<dbReference type="InterPro" id="IPR011033">
    <property type="entry name" value="PRC_barrel-like_sf"/>
</dbReference>
<dbReference type="InterPro" id="IPR056792">
    <property type="entry name" value="PRC_RimM"/>
</dbReference>
<dbReference type="InterPro" id="IPR011961">
    <property type="entry name" value="RimM"/>
</dbReference>
<dbReference type="InterPro" id="IPR002676">
    <property type="entry name" value="RimM_N"/>
</dbReference>
<dbReference type="InterPro" id="IPR036976">
    <property type="entry name" value="RimM_N_sf"/>
</dbReference>
<dbReference type="InterPro" id="IPR009000">
    <property type="entry name" value="Transl_B-barrel_sf"/>
</dbReference>
<dbReference type="NCBIfam" id="TIGR02273">
    <property type="entry name" value="16S_RimM"/>
    <property type="match status" value="1"/>
</dbReference>
<dbReference type="PANTHER" id="PTHR33692">
    <property type="entry name" value="RIBOSOME MATURATION FACTOR RIMM"/>
    <property type="match status" value="1"/>
</dbReference>
<dbReference type="PANTHER" id="PTHR33692:SF1">
    <property type="entry name" value="RIBOSOME MATURATION FACTOR RIMM"/>
    <property type="match status" value="1"/>
</dbReference>
<dbReference type="Pfam" id="PF24986">
    <property type="entry name" value="PRC_RimM"/>
    <property type="match status" value="1"/>
</dbReference>
<dbReference type="Pfam" id="PF01782">
    <property type="entry name" value="RimM"/>
    <property type="match status" value="1"/>
</dbReference>
<dbReference type="SUPFAM" id="SSF50346">
    <property type="entry name" value="PRC-barrel domain"/>
    <property type="match status" value="1"/>
</dbReference>
<dbReference type="SUPFAM" id="SSF50447">
    <property type="entry name" value="Translation proteins"/>
    <property type="match status" value="1"/>
</dbReference>
<feature type="chain" id="PRO_0000244143" description="Ribosome maturation factor RimM">
    <location>
        <begin position="1"/>
        <end position="166"/>
    </location>
</feature>
<feature type="domain" description="PRC barrel" evidence="1">
    <location>
        <begin position="94"/>
        <end position="166"/>
    </location>
</feature>
<reference key="1">
    <citation type="submission" date="2006-01" db="EMBL/GenBank/DDBJ databases">
        <title>Complete sequence of Novosphingobium aromaticivorans DSM 12444.</title>
        <authorList>
            <consortium name="US DOE Joint Genome Institute"/>
            <person name="Copeland A."/>
            <person name="Lucas S."/>
            <person name="Lapidus A."/>
            <person name="Barry K."/>
            <person name="Detter J.C."/>
            <person name="Glavina T."/>
            <person name="Hammon N."/>
            <person name="Israni S."/>
            <person name="Pitluck S."/>
            <person name="Chain P."/>
            <person name="Malfatti S."/>
            <person name="Shin M."/>
            <person name="Vergez L."/>
            <person name="Schmutz J."/>
            <person name="Larimer F."/>
            <person name="Land M."/>
            <person name="Kyrpides N."/>
            <person name="Ivanova N."/>
            <person name="Fredrickson J."/>
            <person name="Balkwill D."/>
            <person name="Romine M.F."/>
            <person name="Richardson P."/>
        </authorList>
    </citation>
    <scope>NUCLEOTIDE SEQUENCE [LARGE SCALE GENOMIC DNA]</scope>
    <source>
        <strain>ATCC 700278 / DSM 12444 / CCUG 56034 / CIP 105152 / NBRC 16084 / F199</strain>
    </source>
</reference>
<proteinExistence type="inferred from homology"/>
<sequence>MRDRPVTLAAITGAHGVAGEVRLKLFGEGVAALKRYRAFNDSGDGSGLTVVKIKDDGKGGAIARFAEVPDRTAAEKLRGTALTVRRSELPSLPEGEYYHADLIGLPAVSTEGEMLGECIAVENFGAGDVIEIRKADGKKFMVPMKTEAVPEWTDERIVIEAAYADQ</sequence>
<accession>Q2G8H3</accession>
<comment type="function">
    <text evidence="1">An accessory protein needed during the final step in the assembly of 30S ribosomal subunit, possibly for assembly of the head region. Essential for efficient processing of 16S rRNA. May be needed both before and after RbfA during the maturation of 16S rRNA. It has affinity for free ribosomal 30S subunits but not for 70S ribosomes.</text>
</comment>
<comment type="subunit">
    <text evidence="1">Binds ribosomal protein uS19.</text>
</comment>
<comment type="subcellular location">
    <subcellularLocation>
        <location evidence="1">Cytoplasm</location>
    </subcellularLocation>
</comment>
<comment type="domain">
    <text evidence="1">The PRC barrel domain binds ribosomal protein uS19.</text>
</comment>
<comment type="similarity">
    <text evidence="1">Belongs to the RimM family.</text>
</comment>